<gene>
    <name evidence="1" type="primary">panC</name>
    <name type="ordered locus">YpAngola_A1012</name>
</gene>
<accession>A9R1G3</accession>
<protein>
    <recommendedName>
        <fullName evidence="1">Pantothenate synthetase</fullName>
        <shortName evidence="1">PS</shortName>
        <ecNumber evidence="1">6.3.2.1</ecNumber>
    </recommendedName>
    <alternativeName>
        <fullName evidence="1">Pantoate--beta-alanine ligase</fullName>
    </alternativeName>
    <alternativeName>
        <fullName evidence="1">Pantoate-activating enzyme</fullName>
    </alternativeName>
</protein>
<evidence type="ECO:0000255" key="1">
    <source>
        <dbReference type="HAMAP-Rule" id="MF_00158"/>
    </source>
</evidence>
<feature type="chain" id="PRO_1000097134" description="Pantothenate synthetase">
    <location>
        <begin position="1"/>
        <end position="284"/>
    </location>
</feature>
<feature type="active site" description="Proton donor" evidence="1">
    <location>
        <position position="37"/>
    </location>
</feature>
<feature type="binding site" evidence="1">
    <location>
        <begin position="30"/>
        <end position="37"/>
    </location>
    <ligand>
        <name>ATP</name>
        <dbReference type="ChEBI" id="CHEBI:30616"/>
    </ligand>
</feature>
<feature type="binding site" evidence="1">
    <location>
        <position position="61"/>
    </location>
    <ligand>
        <name>(R)-pantoate</name>
        <dbReference type="ChEBI" id="CHEBI:15980"/>
    </ligand>
</feature>
<feature type="binding site" evidence="1">
    <location>
        <position position="61"/>
    </location>
    <ligand>
        <name>beta-alanine</name>
        <dbReference type="ChEBI" id="CHEBI:57966"/>
    </ligand>
</feature>
<feature type="binding site" evidence="1">
    <location>
        <begin position="149"/>
        <end position="152"/>
    </location>
    <ligand>
        <name>ATP</name>
        <dbReference type="ChEBI" id="CHEBI:30616"/>
    </ligand>
</feature>
<feature type="binding site" evidence="1">
    <location>
        <position position="155"/>
    </location>
    <ligand>
        <name>(R)-pantoate</name>
        <dbReference type="ChEBI" id="CHEBI:15980"/>
    </ligand>
</feature>
<feature type="binding site" evidence="1">
    <location>
        <position position="178"/>
    </location>
    <ligand>
        <name>ATP</name>
        <dbReference type="ChEBI" id="CHEBI:30616"/>
    </ligand>
</feature>
<feature type="binding site" evidence="1">
    <location>
        <begin position="186"/>
        <end position="189"/>
    </location>
    <ligand>
        <name>ATP</name>
        <dbReference type="ChEBI" id="CHEBI:30616"/>
    </ligand>
</feature>
<sequence>MLIIETLPLLRQQIRRWRQEGKRIALVPTMGNLHEGHMTLVDEAKTRADVVVVTIFVNPLQFERPDDLAHYPRTLQEDCEKLTRHGADLVFAPAAADIYPAGLEKQTYVDVPALSTILEGASRPGHFRGVSTIVSKLFNLIQPDVACFGEKDYQQLALIRKMVADMGYDINIVGVPTVRAKDGLALSSRNGYLTEEERQIAPQLSKIMWALAEKMALGERQIDALLEEAAAQLLRVGFTPDELFIRDAETLQPLTVDSQQAVILMAAWLGKARLIDNQLVDLRH</sequence>
<reference key="1">
    <citation type="journal article" date="2010" name="J. Bacteriol.">
        <title>Genome sequence of the deep-rooted Yersinia pestis strain Angola reveals new insights into the evolution and pangenome of the plague bacterium.</title>
        <authorList>
            <person name="Eppinger M."/>
            <person name="Worsham P.L."/>
            <person name="Nikolich M.P."/>
            <person name="Riley D.R."/>
            <person name="Sebastian Y."/>
            <person name="Mou S."/>
            <person name="Achtman M."/>
            <person name="Lindler L.E."/>
            <person name="Ravel J."/>
        </authorList>
    </citation>
    <scope>NUCLEOTIDE SEQUENCE [LARGE SCALE GENOMIC DNA]</scope>
    <source>
        <strain>Angola</strain>
    </source>
</reference>
<name>PANC_YERPG</name>
<comment type="function">
    <text evidence="1">Catalyzes the condensation of pantoate with beta-alanine in an ATP-dependent reaction via a pantoyl-adenylate intermediate.</text>
</comment>
<comment type="catalytic activity">
    <reaction evidence="1">
        <text>(R)-pantoate + beta-alanine + ATP = (R)-pantothenate + AMP + diphosphate + H(+)</text>
        <dbReference type="Rhea" id="RHEA:10912"/>
        <dbReference type="ChEBI" id="CHEBI:15378"/>
        <dbReference type="ChEBI" id="CHEBI:15980"/>
        <dbReference type="ChEBI" id="CHEBI:29032"/>
        <dbReference type="ChEBI" id="CHEBI:30616"/>
        <dbReference type="ChEBI" id="CHEBI:33019"/>
        <dbReference type="ChEBI" id="CHEBI:57966"/>
        <dbReference type="ChEBI" id="CHEBI:456215"/>
        <dbReference type="EC" id="6.3.2.1"/>
    </reaction>
</comment>
<comment type="pathway">
    <text evidence="1">Cofactor biosynthesis; (R)-pantothenate biosynthesis; (R)-pantothenate from (R)-pantoate and beta-alanine: step 1/1.</text>
</comment>
<comment type="subunit">
    <text evidence="1">Homodimer.</text>
</comment>
<comment type="subcellular location">
    <subcellularLocation>
        <location evidence="1">Cytoplasm</location>
    </subcellularLocation>
</comment>
<comment type="miscellaneous">
    <text evidence="1">The reaction proceeds by a bi uni uni bi ping pong mechanism.</text>
</comment>
<comment type="similarity">
    <text evidence="1">Belongs to the pantothenate synthetase family.</text>
</comment>
<dbReference type="EC" id="6.3.2.1" evidence="1"/>
<dbReference type="EMBL" id="CP000901">
    <property type="protein sequence ID" value="ABX85096.1"/>
    <property type="molecule type" value="Genomic_DNA"/>
</dbReference>
<dbReference type="RefSeq" id="WP_002209348.1">
    <property type="nucleotide sequence ID" value="NZ_CP009935.1"/>
</dbReference>
<dbReference type="SMR" id="A9R1G3"/>
<dbReference type="GeneID" id="57975307"/>
<dbReference type="KEGG" id="ypg:YpAngola_A1012"/>
<dbReference type="PATRIC" id="fig|349746.12.peg.1960"/>
<dbReference type="UniPathway" id="UPA00028">
    <property type="reaction ID" value="UER00005"/>
</dbReference>
<dbReference type="GO" id="GO:0005829">
    <property type="term" value="C:cytosol"/>
    <property type="evidence" value="ECO:0007669"/>
    <property type="project" value="TreeGrafter"/>
</dbReference>
<dbReference type="GO" id="GO:0005524">
    <property type="term" value="F:ATP binding"/>
    <property type="evidence" value="ECO:0007669"/>
    <property type="project" value="UniProtKB-KW"/>
</dbReference>
<dbReference type="GO" id="GO:0004592">
    <property type="term" value="F:pantoate-beta-alanine ligase activity"/>
    <property type="evidence" value="ECO:0007669"/>
    <property type="project" value="UniProtKB-UniRule"/>
</dbReference>
<dbReference type="GO" id="GO:0015940">
    <property type="term" value="P:pantothenate biosynthetic process"/>
    <property type="evidence" value="ECO:0007669"/>
    <property type="project" value="UniProtKB-UniRule"/>
</dbReference>
<dbReference type="CDD" id="cd00560">
    <property type="entry name" value="PanC"/>
    <property type="match status" value="1"/>
</dbReference>
<dbReference type="FunFam" id="3.30.1300.10:FF:000001">
    <property type="entry name" value="Pantothenate synthetase"/>
    <property type="match status" value="1"/>
</dbReference>
<dbReference type="FunFam" id="3.40.50.620:FF:000013">
    <property type="entry name" value="Pantothenate synthetase"/>
    <property type="match status" value="1"/>
</dbReference>
<dbReference type="Gene3D" id="3.40.50.620">
    <property type="entry name" value="HUPs"/>
    <property type="match status" value="1"/>
</dbReference>
<dbReference type="Gene3D" id="3.30.1300.10">
    <property type="entry name" value="Pantoate-beta-alanine ligase, C-terminal domain"/>
    <property type="match status" value="1"/>
</dbReference>
<dbReference type="HAMAP" id="MF_00158">
    <property type="entry name" value="PanC"/>
    <property type="match status" value="1"/>
</dbReference>
<dbReference type="InterPro" id="IPR003721">
    <property type="entry name" value="Pantoate_ligase"/>
</dbReference>
<dbReference type="InterPro" id="IPR042176">
    <property type="entry name" value="Pantoate_ligase_C"/>
</dbReference>
<dbReference type="InterPro" id="IPR014729">
    <property type="entry name" value="Rossmann-like_a/b/a_fold"/>
</dbReference>
<dbReference type="NCBIfam" id="TIGR00018">
    <property type="entry name" value="panC"/>
    <property type="match status" value="1"/>
</dbReference>
<dbReference type="PANTHER" id="PTHR21299">
    <property type="entry name" value="CYTIDYLATE KINASE/PANTOATE-BETA-ALANINE LIGASE"/>
    <property type="match status" value="1"/>
</dbReference>
<dbReference type="PANTHER" id="PTHR21299:SF1">
    <property type="entry name" value="PANTOATE--BETA-ALANINE LIGASE"/>
    <property type="match status" value="1"/>
</dbReference>
<dbReference type="Pfam" id="PF02569">
    <property type="entry name" value="Pantoate_ligase"/>
    <property type="match status" value="1"/>
</dbReference>
<dbReference type="SUPFAM" id="SSF52374">
    <property type="entry name" value="Nucleotidylyl transferase"/>
    <property type="match status" value="1"/>
</dbReference>
<proteinExistence type="inferred from homology"/>
<organism>
    <name type="scientific">Yersinia pestis bv. Antiqua (strain Angola)</name>
    <dbReference type="NCBI Taxonomy" id="349746"/>
    <lineage>
        <taxon>Bacteria</taxon>
        <taxon>Pseudomonadati</taxon>
        <taxon>Pseudomonadota</taxon>
        <taxon>Gammaproteobacteria</taxon>
        <taxon>Enterobacterales</taxon>
        <taxon>Yersiniaceae</taxon>
        <taxon>Yersinia</taxon>
    </lineage>
</organism>
<keyword id="KW-0067">ATP-binding</keyword>
<keyword id="KW-0963">Cytoplasm</keyword>
<keyword id="KW-0436">Ligase</keyword>
<keyword id="KW-0547">Nucleotide-binding</keyword>
<keyword id="KW-0566">Pantothenate biosynthesis</keyword>